<reference key="1">
    <citation type="journal article" date="2004" name="J. Bacteriol.">
        <title>Structure of Pseudomonas aeruginosa populations analyzed by single nucleotide polymorphism and pulsed-field gel electrophoresis genotyping.</title>
        <authorList>
            <person name="Morales G."/>
            <person name="Wiehlmann L."/>
            <person name="Gudowius P."/>
            <person name="van Delden C."/>
            <person name="Tummler B."/>
            <person name="Martinez J.L."/>
            <person name="Rojo F."/>
        </authorList>
    </citation>
    <scope>NUCLEOTIDE SEQUENCE [GENOMIC DNA]</scope>
    <source>
        <strain>19G12</strain>
        <strain>63741</strain>
        <strain>892</strain>
        <strain>ATCC 10145 / DSM 50071 / JCM 5962 / LMG 1242 / NBRC 12689 / NCIMB 8295 / NRRL B-771</strain>
        <strain>ATCC15524</strain>
        <strain>ATCC15691</strain>
        <strain>ATCC33356</strain>
        <strain>ATCC33818</strain>
        <strain>CECT119</strain>
        <strain>CHA</strain>
        <strain>DM</strain>
        <strain>G7</strain>
        <strain>HJ2</strain>
        <strain>K9</strain>
        <strain>RR1</strain>
        <strain>SG1</strain>
        <strain>SG31</strain>
    </source>
</reference>
<reference key="2">
    <citation type="journal article" date="2000" name="Nature">
        <title>Complete genome sequence of Pseudomonas aeruginosa PAO1, an opportunistic pathogen.</title>
        <authorList>
            <person name="Stover C.K."/>
            <person name="Pham X.-Q.T."/>
            <person name="Erwin A.L."/>
            <person name="Mizoguchi S.D."/>
            <person name="Warrener P."/>
            <person name="Hickey M.J."/>
            <person name="Brinkman F.S.L."/>
            <person name="Hufnagle W.O."/>
            <person name="Kowalik D.J."/>
            <person name="Lagrou M."/>
            <person name="Garber R.L."/>
            <person name="Goltry L."/>
            <person name="Tolentino E."/>
            <person name="Westbrock-Wadman S."/>
            <person name="Yuan Y."/>
            <person name="Brody L.L."/>
            <person name="Coulter S.N."/>
            <person name="Folger K.R."/>
            <person name="Kas A."/>
            <person name="Larbig K."/>
            <person name="Lim R.M."/>
            <person name="Smith K.A."/>
            <person name="Spencer D.H."/>
            <person name="Wong G.K.-S."/>
            <person name="Wu Z."/>
            <person name="Paulsen I.T."/>
            <person name="Reizer J."/>
            <person name="Saier M.H. Jr."/>
            <person name="Hancock R.E.W."/>
            <person name="Lory S."/>
            <person name="Olson M.V."/>
        </authorList>
    </citation>
    <scope>NUCLEOTIDE SEQUENCE [LARGE SCALE GENOMIC DNA]</scope>
    <source>
        <strain>ATCC 15692 / DSM 22644 / CIP 104116 / JCM 14847 / LMG 12228 / 1C / PRS 101 / PAO1</strain>
    </source>
</reference>
<reference key="3">
    <citation type="journal article" date="2003" name="Antonie Van Leeuwenhoek">
        <title>Functional characterization of genes involved in alkane oxidation by Pseudomonas aeruginosa.</title>
        <authorList>
            <person name="Smits T.H."/>
            <person name="Witholt B."/>
            <person name="van Beilen J.B."/>
        </authorList>
    </citation>
    <scope>FUNCTION IN ALKANE DEGRADATION</scope>
</reference>
<reference key="4">
    <citation type="journal article" date="2003" name="J. Bacteriol.">
        <title>Differential expression of the components of the two alkane hydroxylases from Pseudomonas aeruginosa.</title>
        <authorList>
            <person name="Marin M.M."/>
            <person name="Yuste L."/>
            <person name="Rojo F."/>
        </authorList>
    </citation>
    <scope>INDUCTION</scope>
    <scope>SUBSTRATE SPECIFICITY</scope>
    <scope>CATALYTIC ACTIVITY</scope>
    <source>
        <strain>ATCC 15692 / DSM 22644 / CIP 104116 / JCM 14847 / LMG 12228 / 1C / PRS 101 / PAO1</strain>
    </source>
</reference>
<accession>Q6H941</accession>
<accession>Q9I3I8</accession>
<feature type="chain" id="PRO_0000392219" description="Alkane 1-monooxygenase 2">
    <location>
        <begin position="1"/>
        <end position="377"/>
    </location>
</feature>
<feature type="transmembrane region" description="Helical" evidence="2">
    <location>
        <begin position="17"/>
        <end position="37"/>
    </location>
</feature>
<feature type="transmembrane region" description="Helical" evidence="2">
    <location>
        <begin position="43"/>
        <end position="63"/>
    </location>
</feature>
<feature type="transmembrane region" description="Helical" evidence="2">
    <location>
        <begin position="87"/>
        <end position="107"/>
    </location>
</feature>
<feature type="transmembrane region" description="Helical" evidence="2">
    <location>
        <begin position="116"/>
        <end position="136"/>
    </location>
</feature>
<feature type="transmembrane region" description="Helical" evidence="2">
    <location>
        <begin position="236"/>
        <end position="256"/>
    </location>
</feature>
<feature type="binding site" evidence="1">
    <location>
        <position position="138"/>
    </location>
    <ligand>
        <name>Fe cation</name>
        <dbReference type="ChEBI" id="CHEBI:24875"/>
        <label>1</label>
    </ligand>
</feature>
<feature type="binding site" evidence="1">
    <location>
        <position position="142"/>
    </location>
    <ligand>
        <name>Fe cation</name>
        <dbReference type="ChEBI" id="CHEBI:24875"/>
        <label>1</label>
    </ligand>
</feature>
<feature type="binding site" evidence="1">
    <location>
        <position position="168"/>
    </location>
    <ligand>
        <name>Fe cation</name>
        <dbReference type="ChEBI" id="CHEBI:24875"/>
        <label>1</label>
    </ligand>
</feature>
<feature type="binding site" evidence="1">
    <location>
        <position position="172"/>
    </location>
    <ligand>
        <name>Fe cation</name>
        <dbReference type="ChEBI" id="CHEBI:24875"/>
        <label>1</label>
    </ligand>
</feature>
<feature type="binding site" evidence="1">
    <location>
        <position position="173"/>
    </location>
    <ligand>
        <name>Fe cation</name>
        <dbReference type="ChEBI" id="CHEBI:24875"/>
        <label>2</label>
    </ligand>
</feature>
<feature type="binding site" evidence="1">
    <location>
        <position position="312"/>
    </location>
    <ligand>
        <name>Fe cation</name>
        <dbReference type="ChEBI" id="CHEBI:24875"/>
        <label>2</label>
    </ligand>
</feature>
<feature type="binding site" evidence="1">
    <location>
        <position position="315"/>
    </location>
    <ligand>
        <name>Fe cation</name>
        <dbReference type="ChEBI" id="CHEBI:24875"/>
        <label>2</label>
    </ligand>
</feature>
<feature type="binding site" evidence="1">
    <location>
        <position position="316"/>
    </location>
    <ligand>
        <name>Fe cation</name>
        <dbReference type="ChEBI" id="CHEBI:24875"/>
        <label>2</label>
    </ligand>
</feature>
<sequence length="377" mass="43408">MFASLSSAWMLRLKKYGYWIWLIAVLGIPLSYWWSLGSDYPNAWPWLVISVVFGLIPILDAIVGRDPANPEEASEVPEMEAQGYYRVLSLATVPLLLGMLVWSGWILAHETRWDWVGQLGWILSVGTVMGAIGITVSHELIHKDPQLEQNAGGLLLAAVCYAGFKVEHVRGHHVHVSTPEDASSSRYGQSLYSFLPHAYKHNFLNAWRLEAERLKRKGLPALHWRNELIWWYAISALFLLGFSLAFGWLGAIFFLGQSVMAFTLLEIVNYVEHYGLHRRRLDNGRYERTTPEHSWNSNFLLTNLFLFHLQRHSDHHAYAKRRYQVLRHYDSSPQLPNGYAGMIVLALFPPLWRAVMDPKVRAYYAGEEYQLTDTQRI</sequence>
<dbReference type="EC" id="1.14.15.3" evidence="4"/>
<dbReference type="EMBL" id="AE004091">
    <property type="protein sequence ID" value="AAG04914.1"/>
    <property type="molecule type" value="Genomic_DNA"/>
</dbReference>
<dbReference type="EMBL" id="AJ633602">
    <property type="protein sequence ID" value="CAG17594.1"/>
    <property type="molecule type" value="Genomic_DNA"/>
</dbReference>
<dbReference type="EMBL" id="AJ633603">
    <property type="protein sequence ID" value="CAG17595.1"/>
    <property type="molecule type" value="Genomic_DNA"/>
</dbReference>
<dbReference type="EMBL" id="AJ633604">
    <property type="protein sequence ID" value="CAG17596.1"/>
    <property type="molecule type" value="Genomic_DNA"/>
</dbReference>
<dbReference type="EMBL" id="AJ633605">
    <property type="protein sequence ID" value="CAG17597.1"/>
    <property type="molecule type" value="Genomic_DNA"/>
</dbReference>
<dbReference type="EMBL" id="AJ633606">
    <property type="protein sequence ID" value="CAG17598.1"/>
    <property type="molecule type" value="Genomic_DNA"/>
</dbReference>
<dbReference type="EMBL" id="AJ633608">
    <property type="protein sequence ID" value="CAG17600.1"/>
    <property type="molecule type" value="Genomic_DNA"/>
</dbReference>
<dbReference type="EMBL" id="AJ633609">
    <property type="protein sequence ID" value="CAG17601.1"/>
    <property type="molecule type" value="Genomic_DNA"/>
</dbReference>
<dbReference type="EMBL" id="AJ633610">
    <property type="protein sequence ID" value="CAG17602.1"/>
    <property type="molecule type" value="Genomic_DNA"/>
</dbReference>
<dbReference type="EMBL" id="AJ633611">
    <property type="protein sequence ID" value="CAG17603.1"/>
    <property type="molecule type" value="Genomic_DNA"/>
</dbReference>
<dbReference type="EMBL" id="AJ633612">
    <property type="protein sequence ID" value="CAG17604.1"/>
    <property type="molecule type" value="Genomic_DNA"/>
</dbReference>
<dbReference type="EMBL" id="AJ633613">
    <property type="protein sequence ID" value="CAG17605.1"/>
    <property type="molecule type" value="Genomic_DNA"/>
</dbReference>
<dbReference type="EMBL" id="AJ633614">
    <property type="protein sequence ID" value="CAG17606.1"/>
    <property type="molecule type" value="Genomic_DNA"/>
</dbReference>
<dbReference type="EMBL" id="AJ633615">
    <property type="protein sequence ID" value="CAG17607.1"/>
    <property type="molecule type" value="Genomic_DNA"/>
</dbReference>
<dbReference type="EMBL" id="AJ633617">
    <property type="protein sequence ID" value="CAG17609.1"/>
    <property type="molecule type" value="Genomic_DNA"/>
</dbReference>
<dbReference type="EMBL" id="AJ633618">
    <property type="protein sequence ID" value="CAG17610.1"/>
    <property type="molecule type" value="Genomic_DNA"/>
</dbReference>
<dbReference type="EMBL" id="AJ633619">
    <property type="protein sequence ID" value="CAG17611.1"/>
    <property type="molecule type" value="Genomic_DNA"/>
</dbReference>
<dbReference type="EMBL" id="AJ633620">
    <property type="protein sequence ID" value="CAG17612.1"/>
    <property type="molecule type" value="Genomic_DNA"/>
</dbReference>
<dbReference type="PIR" id="B83454">
    <property type="entry name" value="B83454"/>
</dbReference>
<dbReference type="RefSeq" id="NP_250216.1">
    <property type="nucleotide sequence ID" value="NC_002516.2"/>
</dbReference>
<dbReference type="RefSeq" id="WP_003083349.1">
    <property type="nucleotide sequence ID" value="NZ_QZGE01000032.1"/>
</dbReference>
<dbReference type="SMR" id="Q6H941"/>
<dbReference type="STRING" id="208964.PA1525"/>
<dbReference type="PaxDb" id="208964-PA1525"/>
<dbReference type="GeneID" id="879517"/>
<dbReference type="KEGG" id="pae:PA1525"/>
<dbReference type="PATRIC" id="fig|208964.12.peg.1578"/>
<dbReference type="PseudoCAP" id="PA1525"/>
<dbReference type="HOGENOM" id="CLU_044462_1_0_6"/>
<dbReference type="InParanoid" id="Q6H941"/>
<dbReference type="OrthoDB" id="4759734at2"/>
<dbReference type="PhylomeDB" id="Q6H941"/>
<dbReference type="BioCyc" id="PAER208964:G1FZ6-1552-MONOMER"/>
<dbReference type="UniPathway" id="UPA00191"/>
<dbReference type="Proteomes" id="UP000002438">
    <property type="component" value="Chromosome"/>
</dbReference>
<dbReference type="GO" id="GO:0005886">
    <property type="term" value="C:plasma membrane"/>
    <property type="evidence" value="ECO:0007669"/>
    <property type="project" value="UniProtKB-SubCell"/>
</dbReference>
<dbReference type="GO" id="GO:0018685">
    <property type="term" value="F:alkane 1-monooxygenase activity"/>
    <property type="evidence" value="ECO:0000250"/>
    <property type="project" value="UniProtKB"/>
</dbReference>
<dbReference type="GO" id="GO:0046872">
    <property type="term" value="F:metal ion binding"/>
    <property type="evidence" value="ECO:0007669"/>
    <property type="project" value="UniProtKB-KW"/>
</dbReference>
<dbReference type="GO" id="GO:0043448">
    <property type="term" value="P:alkane catabolic process"/>
    <property type="evidence" value="ECO:0000250"/>
    <property type="project" value="UniProtKB"/>
</dbReference>
<dbReference type="GO" id="GO:0006629">
    <property type="term" value="P:lipid metabolic process"/>
    <property type="evidence" value="ECO:0007669"/>
    <property type="project" value="InterPro"/>
</dbReference>
<dbReference type="CDD" id="cd03512">
    <property type="entry name" value="Alkane-hydroxylase"/>
    <property type="match status" value="1"/>
</dbReference>
<dbReference type="InterPro" id="IPR033885">
    <property type="entry name" value="AlkB/XylM"/>
</dbReference>
<dbReference type="InterPro" id="IPR005804">
    <property type="entry name" value="FA_desaturase_dom"/>
</dbReference>
<dbReference type="PANTHER" id="PTHR38674">
    <property type="entry name" value="ALKANE 1-MONOOXYGENASE 1"/>
    <property type="match status" value="1"/>
</dbReference>
<dbReference type="PANTHER" id="PTHR38674:SF1">
    <property type="entry name" value="ALKANE 1-MONOOXYGENASE 1"/>
    <property type="match status" value="1"/>
</dbReference>
<dbReference type="Pfam" id="PF00487">
    <property type="entry name" value="FA_desaturase"/>
    <property type="match status" value="1"/>
</dbReference>
<gene>
    <name type="primary">alkB2</name>
    <name type="ordered locus">PA1525</name>
</gene>
<name>ALKB2_PSEAE</name>
<comment type="function">
    <text evidence="4">Catalyzes the hydroxylation of n-alkanes in the presence of a NADH-rubredoxin reductase and rubredoxin. It preferably hydroxylases C12-C20 hydrocarbons.</text>
</comment>
<comment type="catalytic activity">
    <reaction evidence="4">
        <text>octane + 2 reduced [rubredoxin] + O2 + 2 H(+) = 2 oxidized [rubredoxin] + octan-1-ol + H2O</text>
        <dbReference type="Rhea" id="RHEA:19341"/>
        <dbReference type="Rhea" id="RHEA-COMP:10302"/>
        <dbReference type="Rhea" id="RHEA-COMP:10303"/>
        <dbReference type="ChEBI" id="CHEBI:15377"/>
        <dbReference type="ChEBI" id="CHEBI:15378"/>
        <dbReference type="ChEBI" id="CHEBI:15379"/>
        <dbReference type="ChEBI" id="CHEBI:16188"/>
        <dbReference type="ChEBI" id="CHEBI:17590"/>
        <dbReference type="ChEBI" id="CHEBI:29033"/>
        <dbReference type="ChEBI" id="CHEBI:29034"/>
        <dbReference type="EC" id="1.14.15.3"/>
    </reaction>
</comment>
<comment type="cofactor">
    <cofactor evidence="1">
        <name>Fe(3+)</name>
        <dbReference type="ChEBI" id="CHEBI:29034"/>
    </cofactor>
    <text evidence="1">Binds 2 Fe(3+) ions per subunit.</text>
</comment>
<comment type="pathway">
    <text>Hydrocarbon metabolism; alkane degradation.</text>
</comment>
<comment type="subcellular location">
    <subcellularLocation>
        <location evidence="5">Cell inner membrane</location>
        <topology evidence="5">Multi-pass membrane protein</topology>
    </subcellularLocation>
</comment>
<comment type="induction">
    <text evidence="3">Induced by n-alkanes when cells grow fast during the exponential phase. Expression decreases significantly when cells reached the stationary phase of growth. Repressed by citrate.</text>
</comment>
<comment type="similarity">
    <text evidence="5">Belongs to the fatty acid desaturase type 1 family. AlkB subfamily.</text>
</comment>
<organism>
    <name type="scientific">Pseudomonas aeruginosa (strain ATCC 15692 / DSM 22644 / CIP 104116 / JCM 14847 / LMG 12228 / 1C / PRS 101 / PAO1)</name>
    <dbReference type="NCBI Taxonomy" id="208964"/>
    <lineage>
        <taxon>Bacteria</taxon>
        <taxon>Pseudomonadati</taxon>
        <taxon>Pseudomonadota</taxon>
        <taxon>Gammaproteobacteria</taxon>
        <taxon>Pseudomonadales</taxon>
        <taxon>Pseudomonadaceae</taxon>
        <taxon>Pseudomonas</taxon>
    </lineage>
</organism>
<protein>
    <recommendedName>
        <fullName>Alkane 1-monooxygenase 2</fullName>
        <ecNumber evidence="4">1.14.15.3</ecNumber>
    </recommendedName>
    <alternativeName>
        <fullName>Alkane hydroxylase</fullName>
        <shortName>AHs</shortName>
    </alternativeName>
    <alternativeName>
        <fullName>Terminal alkane hydroxylase</fullName>
    </alternativeName>
</protein>
<evidence type="ECO:0000250" key="1">
    <source>
        <dbReference type="UniProtKB" id="P12691"/>
    </source>
</evidence>
<evidence type="ECO:0000255" key="2"/>
<evidence type="ECO:0000269" key="3">
    <source>
    </source>
</evidence>
<evidence type="ECO:0000269" key="4">
    <source>
    </source>
</evidence>
<evidence type="ECO:0000305" key="5"/>
<proteinExistence type="evidence at protein level"/>
<keyword id="KW-0997">Cell inner membrane</keyword>
<keyword id="KW-1003">Cell membrane</keyword>
<keyword id="KW-0408">Iron</keyword>
<keyword id="KW-0472">Membrane</keyword>
<keyword id="KW-0479">Metal-binding</keyword>
<keyword id="KW-0503">Monooxygenase</keyword>
<keyword id="KW-0560">Oxidoreductase</keyword>
<keyword id="KW-1185">Reference proteome</keyword>
<keyword id="KW-0812">Transmembrane</keyword>
<keyword id="KW-1133">Transmembrane helix</keyword>